<feature type="chain" id="PRO_0000078927" description="Non-structural protein 1">
    <location>
        <begin position="1" status="less than"/>
        <end position="227"/>
    </location>
</feature>
<feature type="region of interest" description="CPSF4-binding" evidence="1">
    <location>
        <begin position="177"/>
        <end position="212"/>
    </location>
</feature>
<feature type="region of interest" description="Disordered" evidence="2">
    <location>
        <begin position="202"/>
        <end position="227"/>
    </location>
</feature>
<feature type="region of interest" description="PABPN1-binding" evidence="1">
    <location>
        <begin position="220"/>
        <end position="227"/>
    </location>
</feature>
<feature type="short sequence motif" description="Nuclear localization signal" evidence="1">
    <location>
        <begin position="31"/>
        <end position="35"/>
    </location>
</feature>
<feature type="short sequence motif" description="Nuclear export signal" evidence="1">
    <location>
        <begin position="134"/>
        <end position="143"/>
    </location>
</feature>
<feature type="non-terminal residue">
    <location>
        <position position="1"/>
    </location>
</feature>
<proteinExistence type="inferred from homology"/>
<reference key="1">
    <citation type="journal article" date="1987" name="Virology">
        <title>Genetic divergence of the NS genes of avian influenza viruses.</title>
        <authorList>
            <person name="Nakajima K."/>
            <person name="Nobusawa E."/>
            <person name="Ogawa T."/>
            <person name="Nakajima S."/>
        </authorList>
    </citation>
    <scope>NUCLEOTIDE SEQUENCE [GENOMIC RNA]</scope>
</reference>
<reference key="2">
    <citation type="journal article" date="2003" name="Virology">
        <title>Intracellular warfare between human influenza viruses and human cells: the roles of the viral NS1 protein.</title>
        <authorList>
            <person name="Krug R.M."/>
            <person name="Yuan W."/>
            <person name="Noah D.L."/>
            <person name="Latham A.G."/>
        </authorList>
    </citation>
    <scope>REVIEW</scope>
</reference>
<name>NS1_I63A3</name>
<keyword id="KW-0025">Alternative splicing</keyword>
<keyword id="KW-1262">Eukaryotic host gene expression shutoff by virus</keyword>
<keyword id="KW-1035">Host cytoplasm</keyword>
<keyword id="KW-1190">Host gene expression shutoff by virus</keyword>
<keyword id="KW-1192">Host mRNA suppression by virus</keyword>
<keyword id="KW-1048">Host nucleus</keyword>
<keyword id="KW-0945">Host-virus interaction</keyword>
<keyword id="KW-1090">Inhibition of host innate immune response by virus</keyword>
<keyword id="KW-1114">Inhibition of host interferon signaling pathway by virus</keyword>
<keyword id="KW-1102">Inhibition of host PKR by virus</keyword>
<keyword id="KW-1103">Inhibition of host pre-mRNA processing by virus</keyword>
<keyword id="KW-1088">Inhibition of host RIG-I by virus</keyword>
<keyword id="KW-1113">Inhibition of host RLR pathway by virus</keyword>
<keyword id="KW-0922">Interferon antiviral system evasion</keyword>
<keyword id="KW-0694">RNA-binding</keyword>
<keyword id="KW-0832">Ubl conjugation</keyword>
<keyword id="KW-0899">Viral immunoevasion</keyword>
<organism>
    <name type="scientific">Influenza A virus (strain A/Duck/Ukraine/1/1963 H3N8)</name>
    <dbReference type="NCBI Taxonomy" id="385580"/>
    <lineage>
        <taxon>Viruses</taxon>
        <taxon>Riboviria</taxon>
        <taxon>Orthornavirae</taxon>
        <taxon>Negarnaviricota</taxon>
        <taxon>Polyploviricotina</taxon>
        <taxon>Insthoviricetes</taxon>
        <taxon>Articulavirales</taxon>
        <taxon>Orthomyxoviridae</taxon>
        <taxon>Alphainfluenzavirus</taxon>
        <taxon>Alphainfluenzavirus influenzae</taxon>
        <taxon>Influenza A virus</taxon>
    </lineage>
</organism>
<organismHost>
    <name type="scientific">Aves</name>
    <dbReference type="NCBI Taxonomy" id="8782"/>
</organismHost>
<organismHost>
    <name type="scientific">Equus caballus</name>
    <name type="common">Horse</name>
    <dbReference type="NCBI Taxonomy" id="9796"/>
</organismHost>
<evidence type="ECO:0000255" key="1">
    <source>
        <dbReference type="HAMAP-Rule" id="MF_04066"/>
    </source>
</evidence>
<evidence type="ECO:0000256" key="2">
    <source>
        <dbReference type="SAM" id="MobiDB-lite"/>
    </source>
</evidence>
<dbReference type="EMBL" id="M16565">
    <property type="protein sequence ID" value="AAA43512.1"/>
    <property type="molecule type" value="Genomic_RNA"/>
</dbReference>
<dbReference type="SMR" id="P08270"/>
<dbReference type="GO" id="GO:0030430">
    <property type="term" value="C:host cell cytoplasm"/>
    <property type="evidence" value="ECO:0007669"/>
    <property type="project" value="UniProtKB-SubCell"/>
</dbReference>
<dbReference type="GO" id="GO:0042025">
    <property type="term" value="C:host cell nucleus"/>
    <property type="evidence" value="ECO:0007669"/>
    <property type="project" value="UniProtKB-SubCell"/>
</dbReference>
<dbReference type="GO" id="GO:0030291">
    <property type="term" value="F:protein serine/threonine kinase inhibitor activity"/>
    <property type="evidence" value="ECO:0007669"/>
    <property type="project" value="UniProtKB-KW"/>
</dbReference>
<dbReference type="GO" id="GO:0003723">
    <property type="term" value="F:RNA binding"/>
    <property type="evidence" value="ECO:0007669"/>
    <property type="project" value="UniProtKB-KW"/>
</dbReference>
<dbReference type="GO" id="GO:0039540">
    <property type="term" value="P:symbiont-mediated suppression of host cytoplasmic pattern recognition receptor signaling pathway via inhibition of RIG-I activity"/>
    <property type="evidence" value="ECO:0007669"/>
    <property type="project" value="UniProtKB-KW"/>
</dbReference>
<dbReference type="GO" id="GO:0039657">
    <property type="term" value="P:symbiont-mediated suppression of host gene expression"/>
    <property type="evidence" value="ECO:0007669"/>
    <property type="project" value="UniProtKB-KW"/>
</dbReference>
<dbReference type="GO" id="GO:0039524">
    <property type="term" value="P:symbiont-mediated suppression of host mRNA processing"/>
    <property type="evidence" value="ECO:0007669"/>
    <property type="project" value="UniProtKB-KW"/>
</dbReference>
<dbReference type="GO" id="GO:0039580">
    <property type="term" value="P:symbiont-mediated suppression of host PKR/eIFalpha signaling"/>
    <property type="evidence" value="ECO:0007669"/>
    <property type="project" value="UniProtKB-KW"/>
</dbReference>
<dbReference type="GO" id="GO:0039502">
    <property type="term" value="P:symbiont-mediated suppression of host type I interferon-mediated signaling pathway"/>
    <property type="evidence" value="ECO:0007669"/>
    <property type="project" value="UniProtKB-KW"/>
</dbReference>
<dbReference type="FunFam" id="1.10.287.10:FF:000001">
    <property type="entry name" value="Non-structural protein 1"/>
    <property type="match status" value="1"/>
</dbReference>
<dbReference type="FunFam" id="3.30.420.330:FF:000001">
    <property type="entry name" value="Non-structural protein 1"/>
    <property type="match status" value="1"/>
</dbReference>
<dbReference type="Gene3D" id="3.30.420.330">
    <property type="entry name" value="Influenza virus non-structural protein, effector domain"/>
    <property type="match status" value="1"/>
</dbReference>
<dbReference type="Gene3D" id="1.10.287.10">
    <property type="entry name" value="S15/NS1, RNA-binding"/>
    <property type="match status" value="1"/>
</dbReference>
<dbReference type="HAMAP" id="MF_04066">
    <property type="entry name" value="INFV_NS1"/>
    <property type="match status" value="1"/>
</dbReference>
<dbReference type="InterPro" id="IPR004208">
    <property type="entry name" value="NS1"/>
</dbReference>
<dbReference type="InterPro" id="IPR000256">
    <property type="entry name" value="NS1A"/>
</dbReference>
<dbReference type="InterPro" id="IPR038064">
    <property type="entry name" value="NS1A_effect_dom-like_sf"/>
</dbReference>
<dbReference type="InterPro" id="IPR009068">
    <property type="entry name" value="uS15_NS1_RNA-bd_sf"/>
</dbReference>
<dbReference type="Pfam" id="PF00600">
    <property type="entry name" value="Flu_NS1"/>
    <property type="match status" value="1"/>
</dbReference>
<dbReference type="SUPFAM" id="SSF143021">
    <property type="entry name" value="Ns1 effector domain-like"/>
    <property type="match status" value="1"/>
</dbReference>
<dbReference type="SUPFAM" id="SSF47060">
    <property type="entry name" value="S15/NS1 RNA-binding domain"/>
    <property type="match status" value="1"/>
</dbReference>
<gene>
    <name evidence="1" type="primary">NS</name>
</gene>
<accession>P08270</accession>
<sequence length="227" mass="25818">NTVSSFQVDCFLWHVRKRFADQELGDAPFLDRLRRDQKSLRGRGSTLGLDIETATRAGKQTVERILEEEFDEVLKMTIASGPASRYLTDMTLEEMSRDWFMLMPKQKMAGSLCIRMDQAIMDKDIILKANFSVIFNRLETLILLRAFTEDGAIVGEISPLPSLPGHTDEDVKNAIGDLIGGLEWNDNTVRVSETLQRFAWRSSNEDGRPPLPPKQKRKMARTIESEV</sequence>
<comment type="function">
    <text evidence="1">Inhibits post-transcriptional processing of cellular pre-mRNA, by binding and inhibiting two cellular proteins that are required for the 3'-end processing of cellular pre-mRNAs: the 30 kDa cleavage and polyadenylation specificity factor/CPSF4 and the poly(A)-binding protein 2/PABPN1. In turn, unprocessed 3' end pre-mRNAs accumulate in the host nucleus and are no longer exported to the cytoplasm. Cellular protein synthesis is thereby shut off very early after virus infection. Viral protein synthesis is not affected by the inhibition of the cellular 3' end processing machinery because the poly(A) tails of viral mRNAs are produced by the viral polymerase through a stuttering mechanism. Prevents the establishment of the cellular antiviral state by inhibiting TRIM25-mediated RIGI ubiquitination, which normally triggers the antiviral transduction signal that leads to the activation of type I IFN genes by transcription factors IRF3 and IRF7. Also binds poly(A) and U6 snRNA. Inhibits the integrated stress response (ISR) in the infected cell by blocking dsRNA binding by EIF2AK2/PKR and further phosphorylation of EIF2S1/EIF-2ALPHA. Stress granule formation is thus inhibited, which allows protein synthesis and viral replication.</text>
</comment>
<comment type="subunit">
    <text evidence="1">Homodimer. Interacts with host TRIM25 (via coiled coil); this interaction specifically inhibits TRIM25 multimerization and TRIM25-mediated RIGI CARD ubiquitination. Interacts with human EIF2AK2/PKR, CPSF4, IVNS1ABP and PABPN1.</text>
</comment>
<comment type="subcellular location">
    <subcellularLocation>
        <location evidence="1">Host nucleus</location>
    </subcellularLocation>
    <subcellularLocation>
        <location evidence="1">Host cytoplasm</location>
    </subcellularLocation>
    <text evidence="1">In uninfected, transfected cells, NS1 is localized in the nucleus. Only in virus infected cells, the nuclear export signal is unveiled, presumably by a viral protein, and a fraction of NS1 is exported in the cytoplasm.</text>
</comment>
<comment type="alternative products">
    <event type="alternative splicing"/>
    <isoform>
        <id>P08270-1</id>
        <name>NS1</name>
        <sequence type="displayed"/>
    </isoform>
    <isoform>
        <id>P08271-1</id>
        <name>NEP</name>
        <name>NS2</name>
        <sequence type="external"/>
    </isoform>
</comment>
<comment type="domain">
    <text evidence="1">The dsRNA-binding region is required for suppression of RNA silencing.</text>
</comment>
<comment type="PTM">
    <text evidence="1">Upon interferon induction, ISGylated via host HERC5; this results in the impairment of NS1 interaction with RNA targets due to its inability to form homodimers and to interact with host EIF2AK2/PKR.</text>
</comment>
<comment type="similarity">
    <text evidence="1">Belongs to the influenza A viruses NS1 family.</text>
</comment>
<protein>
    <recommendedName>
        <fullName evidence="1">Non-structural protein 1</fullName>
        <shortName evidence="1">NS1</shortName>
    </recommendedName>
    <alternativeName>
        <fullName evidence="1">NS1A</fullName>
    </alternativeName>
</protein>